<dbReference type="EMBL" id="CP000155">
    <property type="protein sequence ID" value="ABC31315.1"/>
    <property type="molecule type" value="Genomic_DNA"/>
</dbReference>
<dbReference type="RefSeq" id="WP_011398380.1">
    <property type="nucleotide sequence ID" value="NC_007645.1"/>
</dbReference>
<dbReference type="SMR" id="Q2SDF9"/>
<dbReference type="STRING" id="349521.HCH_04614"/>
<dbReference type="KEGG" id="hch:HCH_04614"/>
<dbReference type="eggNOG" id="COG0234">
    <property type="taxonomic scope" value="Bacteria"/>
</dbReference>
<dbReference type="HOGENOM" id="CLU_132825_2_0_6"/>
<dbReference type="OrthoDB" id="9806791at2"/>
<dbReference type="Proteomes" id="UP000000238">
    <property type="component" value="Chromosome"/>
</dbReference>
<dbReference type="GO" id="GO:0005737">
    <property type="term" value="C:cytoplasm"/>
    <property type="evidence" value="ECO:0007669"/>
    <property type="project" value="UniProtKB-SubCell"/>
</dbReference>
<dbReference type="GO" id="GO:0005524">
    <property type="term" value="F:ATP binding"/>
    <property type="evidence" value="ECO:0007669"/>
    <property type="project" value="InterPro"/>
</dbReference>
<dbReference type="GO" id="GO:0046872">
    <property type="term" value="F:metal ion binding"/>
    <property type="evidence" value="ECO:0007669"/>
    <property type="project" value="TreeGrafter"/>
</dbReference>
<dbReference type="GO" id="GO:0044183">
    <property type="term" value="F:protein folding chaperone"/>
    <property type="evidence" value="ECO:0007669"/>
    <property type="project" value="InterPro"/>
</dbReference>
<dbReference type="GO" id="GO:0051087">
    <property type="term" value="F:protein-folding chaperone binding"/>
    <property type="evidence" value="ECO:0007669"/>
    <property type="project" value="TreeGrafter"/>
</dbReference>
<dbReference type="GO" id="GO:0051082">
    <property type="term" value="F:unfolded protein binding"/>
    <property type="evidence" value="ECO:0007669"/>
    <property type="project" value="TreeGrafter"/>
</dbReference>
<dbReference type="GO" id="GO:0051085">
    <property type="term" value="P:chaperone cofactor-dependent protein refolding"/>
    <property type="evidence" value="ECO:0007669"/>
    <property type="project" value="TreeGrafter"/>
</dbReference>
<dbReference type="CDD" id="cd00320">
    <property type="entry name" value="cpn10"/>
    <property type="match status" value="1"/>
</dbReference>
<dbReference type="FunFam" id="2.30.33.40:FF:000001">
    <property type="entry name" value="10 kDa chaperonin"/>
    <property type="match status" value="1"/>
</dbReference>
<dbReference type="Gene3D" id="2.30.33.40">
    <property type="entry name" value="GroES chaperonin"/>
    <property type="match status" value="1"/>
</dbReference>
<dbReference type="HAMAP" id="MF_00580">
    <property type="entry name" value="CH10"/>
    <property type="match status" value="1"/>
</dbReference>
<dbReference type="InterPro" id="IPR020818">
    <property type="entry name" value="Chaperonin_GroES"/>
</dbReference>
<dbReference type="InterPro" id="IPR037124">
    <property type="entry name" value="Chaperonin_GroES_sf"/>
</dbReference>
<dbReference type="InterPro" id="IPR018369">
    <property type="entry name" value="Chaprnonin_Cpn10_CS"/>
</dbReference>
<dbReference type="InterPro" id="IPR011032">
    <property type="entry name" value="GroES-like_sf"/>
</dbReference>
<dbReference type="NCBIfam" id="NF001527">
    <property type="entry name" value="PRK00364.1-2"/>
    <property type="match status" value="1"/>
</dbReference>
<dbReference type="NCBIfam" id="NF001531">
    <property type="entry name" value="PRK00364.2-2"/>
    <property type="match status" value="1"/>
</dbReference>
<dbReference type="NCBIfam" id="NF001533">
    <property type="entry name" value="PRK00364.2-4"/>
    <property type="match status" value="1"/>
</dbReference>
<dbReference type="NCBIfam" id="NF001534">
    <property type="entry name" value="PRK00364.2-5"/>
    <property type="match status" value="1"/>
</dbReference>
<dbReference type="PANTHER" id="PTHR10772">
    <property type="entry name" value="10 KDA HEAT SHOCK PROTEIN"/>
    <property type="match status" value="1"/>
</dbReference>
<dbReference type="PANTHER" id="PTHR10772:SF58">
    <property type="entry name" value="CO-CHAPERONIN GROES"/>
    <property type="match status" value="1"/>
</dbReference>
<dbReference type="Pfam" id="PF00166">
    <property type="entry name" value="Cpn10"/>
    <property type="match status" value="1"/>
</dbReference>
<dbReference type="PRINTS" id="PR00297">
    <property type="entry name" value="CHAPERONIN10"/>
</dbReference>
<dbReference type="SMART" id="SM00883">
    <property type="entry name" value="Cpn10"/>
    <property type="match status" value="1"/>
</dbReference>
<dbReference type="SUPFAM" id="SSF50129">
    <property type="entry name" value="GroES-like"/>
    <property type="match status" value="1"/>
</dbReference>
<dbReference type="PROSITE" id="PS00681">
    <property type="entry name" value="CHAPERONINS_CPN10"/>
    <property type="match status" value="1"/>
</dbReference>
<proteinExistence type="inferred from homology"/>
<accession>Q2SDF9</accession>
<evidence type="ECO:0000255" key="1">
    <source>
        <dbReference type="HAMAP-Rule" id="MF_00580"/>
    </source>
</evidence>
<sequence length="96" mass="10271">MKIRPLHERVVVRRKEEETKTAGGIVLPGNAAEKPSQGEVLAVGEGRILDNGDVRPLAVKVGDKVVFGQYAGSTVKIDGEELLIMSESDIFGVIEG</sequence>
<keyword id="KW-0143">Chaperone</keyword>
<keyword id="KW-0963">Cytoplasm</keyword>
<keyword id="KW-1185">Reference proteome</keyword>
<feature type="chain" id="PRO_1000025270" description="Co-chaperonin GroES">
    <location>
        <begin position="1"/>
        <end position="96"/>
    </location>
</feature>
<organism>
    <name type="scientific">Hahella chejuensis (strain KCTC 2396)</name>
    <dbReference type="NCBI Taxonomy" id="349521"/>
    <lineage>
        <taxon>Bacteria</taxon>
        <taxon>Pseudomonadati</taxon>
        <taxon>Pseudomonadota</taxon>
        <taxon>Gammaproteobacteria</taxon>
        <taxon>Oceanospirillales</taxon>
        <taxon>Hahellaceae</taxon>
        <taxon>Hahella</taxon>
    </lineage>
</organism>
<protein>
    <recommendedName>
        <fullName evidence="1">Co-chaperonin GroES</fullName>
    </recommendedName>
    <alternativeName>
        <fullName evidence="1">10 kDa chaperonin</fullName>
    </alternativeName>
    <alternativeName>
        <fullName evidence="1">Chaperonin-10</fullName>
        <shortName evidence="1">Cpn10</shortName>
    </alternativeName>
</protein>
<reference key="1">
    <citation type="journal article" date="2005" name="Nucleic Acids Res.">
        <title>Genomic blueprint of Hahella chejuensis, a marine microbe producing an algicidal agent.</title>
        <authorList>
            <person name="Jeong H."/>
            <person name="Yim J.H."/>
            <person name="Lee C."/>
            <person name="Choi S.-H."/>
            <person name="Park Y.K."/>
            <person name="Yoon S.H."/>
            <person name="Hur C.-G."/>
            <person name="Kang H.-Y."/>
            <person name="Kim D."/>
            <person name="Lee H.H."/>
            <person name="Park K.H."/>
            <person name="Park S.-H."/>
            <person name="Park H.-S."/>
            <person name="Lee H.K."/>
            <person name="Oh T.K."/>
            <person name="Kim J.F."/>
        </authorList>
    </citation>
    <scope>NUCLEOTIDE SEQUENCE [LARGE SCALE GENOMIC DNA]</scope>
    <source>
        <strain>KCTC 2396</strain>
    </source>
</reference>
<comment type="function">
    <text evidence="1">Together with the chaperonin GroEL, plays an essential role in assisting protein folding. The GroEL-GroES system forms a nano-cage that allows encapsulation of the non-native substrate proteins and provides a physical environment optimized to promote and accelerate protein folding. GroES binds to the apical surface of the GroEL ring, thereby capping the opening of the GroEL channel.</text>
</comment>
<comment type="subunit">
    <text evidence="1">Heptamer of 7 subunits arranged in a ring. Interacts with the chaperonin GroEL.</text>
</comment>
<comment type="subcellular location">
    <subcellularLocation>
        <location evidence="1">Cytoplasm</location>
    </subcellularLocation>
</comment>
<comment type="similarity">
    <text evidence="1">Belongs to the GroES chaperonin family.</text>
</comment>
<gene>
    <name evidence="1" type="primary">groES</name>
    <name evidence="1" type="synonym">groS</name>
    <name type="ordered locus">HCH_04614</name>
</gene>
<name>CH10_HAHCH</name>